<comment type="function">
    <text evidence="1">Component of the Mediator complex, a coactivator involved in the regulated transcription of nearly all RNA polymerase II-dependent genes. Mediator functions as a bridge to convey information from gene-specific regulatory proteins to the basal RNA polymerase II transcription machinery. Mediator is recruited to promoters by direct interactions with regulatory proteins and serves as a scaffold for the assembly of a functional preinitiation complex with RNA polymerase II and the general transcription factors (By similarity).</text>
</comment>
<comment type="subunit">
    <text evidence="1">Component of the Mediator complex.</text>
</comment>
<comment type="subcellular location">
    <subcellularLocation>
        <location evidence="1">Nucleus</location>
    </subcellularLocation>
</comment>
<comment type="similarity">
    <text evidence="3">Belongs to the Mediator complex subunit 21 family.</text>
</comment>
<reference key="1">
    <citation type="journal article" date="2004" name="Nature">
        <title>Genome evolution in yeasts.</title>
        <authorList>
            <person name="Dujon B."/>
            <person name="Sherman D."/>
            <person name="Fischer G."/>
            <person name="Durrens P."/>
            <person name="Casaregola S."/>
            <person name="Lafontaine I."/>
            <person name="de Montigny J."/>
            <person name="Marck C."/>
            <person name="Neuveglise C."/>
            <person name="Talla E."/>
            <person name="Goffard N."/>
            <person name="Frangeul L."/>
            <person name="Aigle M."/>
            <person name="Anthouard V."/>
            <person name="Babour A."/>
            <person name="Barbe V."/>
            <person name="Barnay S."/>
            <person name="Blanchin S."/>
            <person name="Beckerich J.-M."/>
            <person name="Beyne E."/>
            <person name="Bleykasten C."/>
            <person name="Boisrame A."/>
            <person name="Boyer J."/>
            <person name="Cattolico L."/>
            <person name="Confanioleri F."/>
            <person name="de Daruvar A."/>
            <person name="Despons L."/>
            <person name="Fabre E."/>
            <person name="Fairhead C."/>
            <person name="Ferry-Dumazet H."/>
            <person name="Groppi A."/>
            <person name="Hantraye F."/>
            <person name="Hennequin C."/>
            <person name="Jauniaux N."/>
            <person name="Joyet P."/>
            <person name="Kachouri R."/>
            <person name="Kerrest A."/>
            <person name="Koszul R."/>
            <person name="Lemaire M."/>
            <person name="Lesur I."/>
            <person name="Ma L."/>
            <person name="Muller H."/>
            <person name="Nicaud J.-M."/>
            <person name="Nikolski M."/>
            <person name="Oztas S."/>
            <person name="Ozier-Kalogeropoulos O."/>
            <person name="Pellenz S."/>
            <person name="Potier S."/>
            <person name="Richard G.-F."/>
            <person name="Straub M.-L."/>
            <person name="Suleau A."/>
            <person name="Swennen D."/>
            <person name="Tekaia F."/>
            <person name="Wesolowski-Louvel M."/>
            <person name="Westhof E."/>
            <person name="Wirth B."/>
            <person name="Zeniou-Meyer M."/>
            <person name="Zivanovic Y."/>
            <person name="Bolotin-Fukuhara M."/>
            <person name="Thierry A."/>
            <person name="Bouchier C."/>
            <person name="Caudron B."/>
            <person name="Scarpelli C."/>
            <person name="Gaillardin C."/>
            <person name="Weissenbach J."/>
            <person name="Wincker P."/>
            <person name="Souciet J.-L."/>
        </authorList>
    </citation>
    <scope>NUCLEOTIDE SEQUENCE [LARGE SCALE GENOMIC DNA]</scope>
    <source>
        <strain>ATCC 8585 / CBS 2359 / DSM 70799 / NBRC 1267 / NRRL Y-1140 / WM37</strain>
    </source>
</reference>
<evidence type="ECO:0000250" key="1"/>
<evidence type="ECO:0000255" key="2"/>
<evidence type="ECO:0000305" key="3"/>
<accession>Q6CT76</accession>
<proteinExistence type="inferred from homology"/>
<dbReference type="EMBL" id="CR382123">
    <property type="protein sequence ID" value="CAH01714.2"/>
    <property type="molecule type" value="Genomic_DNA"/>
</dbReference>
<dbReference type="RefSeq" id="XP_452863.2">
    <property type="nucleotide sequence ID" value="XM_452863.2"/>
</dbReference>
<dbReference type="SMR" id="Q6CT76"/>
<dbReference type="FunCoup" id="Q6CT76">
    <property type="interactions" value="321"/>
</dbReference>
<dbReference type="STRING" id="284590.Q6CT76"/>
<dbReference type="PaxDb" id="284590-Q6CT76"/>
<dbReference type="KEGG" id="kla:KLLA0_C14806g"/>
<dbReference type="eggNOG" id="KOG1510">
    <property type="taxonomic scope" value="Eukaryota"/>
</dbReference>
<dbReference type="HOGENOM" id="CLU_094271_1_0_1"/>
<dbReference type="InParanoid" id="Q6CT76"/>
<dbReference type="Proteomes" id="UP000000598">
    <property type="component" value="Chromosome C"/>
</dbReference>
<dbReference type="GO" id="GO:0016592">
    <property type="term" value="C:mediator complex"/>
    <property type="evidence" value="ECO:0007669"/>
    <property type="project" value="InterPro"/>
</dbReference>
<dbReference type="GO" id="GO:0003712">
    <property type="term" value="F:transcription coregulator activity"/>
    <property type="evidence" value="ECO:0007669"/>
    <property type="project" value="TreeGrafter"/>
</dbReference>
<dbReference type="GO" id="GO:0006357">
    <property type="term" value="P:regulation of transcription by RNA polymerase II"/>
    <property type="evidence" value="ECO:0007669"/>
    <property type="project" value="TreeGrafter"/>
</dbReference>
<dbReference type="Gene3D" id="6.10.280.10">
    <property type="entry name" value="Mediator complex, subunit Med21"/>
    <property type="match status" value="1"/>
</dbReference>
<dbReference type="InterPro" id="IPR037212">
    <property type="entry name" value="Med7/Med21-like"/>
</dbReference>
<dbReference type="InterPro" id="IPR021384">
    <property type="entry name" value="Mediator_Med21"/>
</dbReference>
<dbReference type="PANTHER" id="PTHR13381:SF0">
    <property type="entry name" value="MEDIATOR OF RNA POLYMERASE II TRANSCRIPTION SUBUNIT 21"/>
    <property type="match status" value="1"/>
</dbReference>
<dbReference type="PANTHER" id="PTHR13381">
    <property type="entry name" value="RNA POLYMERASE II HOLOENZYME COMPONENT SRB7"/>
    <property type="match status" value="1"/>
</dbReference>
<dbReference type="Pfam" id="PF11221">
    <property type="entry name" value="Med21"/>
    <property type="match status" value="1"/>
</dbReference>
<dbReference type="SUPFAM" id="SSF140718">
    <property type="entry name" value="Mediator hinge subcomplex-like"/>
    <property type="match status" value="1"/>
</dbReference>
<organism>
    <name type="scientific">Kluyveromyces lactis (strain ATCC 8585 / CBS 2359 / DSM 70799 / NBRC 1267 / NRRL Y-1140 / WM37)</name>
    <name type="common">Yeast</name>
    <name type="synonym">Candida sphaerica</name>
    <dbReference type="NCBI Taxonomy" id="284590"/>
    <lineage>
        <taxon>Eukaryota</taxon>
        <taxon>Fungi</taxon>
        <taxon>Dikarya</taxon>
        <taxon>Ascomycota</taxon>
        <taxon>Saccharomycotina</taxon>
        <taxon>Saccharomycetes</taxon>
        <taxon>Saccharomycetales</taxon>
        <taxon>Saccharomycetaceae</taxon>
        <taxon>Kluyveromyces</taxon>
    </lineage>
</organism>
<keyword id="KW-0010">Activator</keyword>
<keyword id="KW-0175">Coiled coil</keyword>
<keyword id="KW-0539">Nucleus</keyword>
<keyword id="KW-1185">Reference proteome</keyword>
<keyword id="KW-0804">Transcription</keyword>
<keyword id="KW-0805">Transcription regulation</keyword>
<feature type="chain" id="PRO_0000305965" description="Mediator of RNA polymerase II transcription subunit 21">
    <location>
        <begin position="1"/>
        <end position="143"/>
    </location>
</feature>
<feature type="coiled-coil region" evidence="2">
    <location>
        <begin position="53"/>
        <end position="130"/>
    </location>
</feature>
<gene>
    <name type="primary">SRB7</name>
    <name type="synonym">MED21</name>
    <name type="ordered locus">KLLA0C14806g</name>
</gene>
<sequence length="143" mass="16492">MTDRLTQLQICLDQMMEQFCGAVNYVDKNHGFEPSNDSEEQMSDPQAHIVEEKEFEKNIDELTTDIILKTRQIMALIDSLPGVDVSAQEQLHRIDSLQKQLIKMEKEKIDAIKRKDALQEKVRTLTQDFTIGINESKTEARLV</sequence>
<name>MED21_KLULA</name>
<protein>
    <recommendedName>
        <fullName>Mediator of RNA polymerase II transcription subunit 21</fullName>
    </recommendedName>
    <alternativeName>
        <fullName>Mediator complex subunit 21</fullName>
    </alternativeName>
</protein>